<comment type="function">
    <text evidence="1">Insecticidal neurotoxin that reversibly inhibits the N-methyl-D-aspartate (NMDA)-subtype of ionotropic glutamate receptor (GRIN) and inhibits inactivation of insect sodium channels (Nav). In vivo, is highly toxic to insects.</text>
</comment>
<comment type="subcellular location">
    <subcellularLocation>
        <location evidence="2">Secreted</location>
    </subcellularLocation>
</comment>
<comment type="tissue specificity">
    <text evidence="5">Expressed by the venom gland.</text>
</comment>
<comment type="mass spectrometry"/>
<comment type="similarity">
    <text evidence="4">Belongs to the neurotoxin 03 (Tx2) family. 05 subfamily.</text>
</comment>
<organism>
    <name type="scientific">Ctenus ornatus</name>
    <name type="common">Brazilian spider</name>
    <name type="synonym">Oligoctenus ornatus</name>
    <dbReference type="NCBI Taxonomy" id="406443"/>
    <lineage>
        <taxon>Eukaryota</taxon>
        <taxon>Metazoa</taxon>
        <taxon>Ecdysozoa</taxon>
        <taxon>Arthropoda</taxon>
        <taxon>Chelicerata</taxon>
        <taxon>Arachnida</taxon>
        <taxon>Araneae</taxon>
        <taxon>Araneomorphae</taxon>
        <taxon>Entelegynae</taxon>
        <taxon>Lycosoidea</taxon>
        <taxon>Ctenidae</taxon>
        <taxon>Oligoctenus</taxon>
    </lineage>
</organism>
<sequence>GKCGDINAPCKAECDCCGYTTCDCYWGN</sequence>
<accession>P85264</accession>
<keyword id="KW-0903">Direct protein sequencing</keyword>
<keyword id="KW-1015">Disulfide bond</keyword>
<keyword id="KW-0872">Ion channel impairing toxin</keyword>
<keyword id="KW-1028">Ionotropic glutamate receptor inhibitor</keyword>
<keyword id="KW-0528">Neurotoxin</keyword>
<keyword id="KW-0629">Postsynaptic neurotoxin</keyword>
<keyword id="KW-0964">Secreted</keyword>
<keyword id="KW-0800">Toxin</keyword>
<keyword id="KW-0738">Voltage-gated sodium channel impairing toxin</keyword>
<name>TX35C_CTEON</name>
<feature type="chain" id="PRO_0000302113" description="U15-ctenitoxin-Co1a" evidence="5">
    <location>
        <begin position="1"/>
        <end position="28" status="greater than"/>
    </location>
</feature>
<feature type="disulfide bond" evidence="4">
    <location>
        <begin position="3"/>
        <end position="17"/>
    </location>
</feature>
<feature type="disulfide bond" evidence="4">
    <location>
        <begin position="10"/>
        <end position="22"/>
    </location>
</feature>
<feature type="disulfide bond" evidence="4">
    <location>
        <begin position="14"/>
        <end status="unknown"/>
    </location>
</feature>
<feature type="disulfide bond" evidence="4">
    <location>
        <begin position="16"/>
        <end status="unknown"/>
    </location>
</feature>
<feature type="disulfide bond" evidence="4">
    <location>
        <begin position="24"/>
        <end status="unknown"/>
    </location>
</feature>
<feature type="non-terminal residue">
    <location>
        <position position="28"/>
    </location>
</feature>
<reference key="1">
    <citation type="submission" date="2007-07" db="UniProtKB">
        <authorList>
            <person name="Borges M.H."/>
            <person name="Oliveira C.F.B."/>
            <person name="Goncalves J.M."/>
            <person name="Rates B."/>
            <person name="Santos D.M."/>
            <person name="Pimenta A.M.C."/>
            <person name="Cordeiro M.N."/>
            <person name="Richardson M."/>
        </authorList>
    </citation>
    <scope>PROTEIN SEQUENCE</scope>
    <scope>SUBCELLULAR LOCATION</scope>
    <scope>MASS SPECTROMETRY</scope>
    <source>
        <tissue>Venom</tissue>
    </source>
</reference>
<evidence type="ECO:0000250" key="1">
    <source>
        <dbReference type="UniProtKB" id="P59367"/>
    </source>
</evidence>
<evidence type="ECO:0000269" key="2">
    <source ref="1"/>
</evidence>
<evidence type="ECO:0000303" key="3">
    <source ref="1"/>
</evidence>
<evidence type="ECO:0000305" key="4"/>
<evidence type="ECO:0000305" key="5">
    <source ref="1"/>
</evidence>
<proteinExistence type="evidence at protein level"/>
<dbReference type="SMR" id="P85264"/>
<dbReference type="ArachnoServer" id="AS000373">
    <property type="toxin name" value="U15-ctenitoxin-Co1a"/>
</dbReference>
<dbReference type="GO" id="GO:0005576">
    <property type="term" value="C:extracellular region"/>
    <property type="evidence" value="ECO:0007669"/>
    <property type="project" value="UniProtKB-SubCell"/>
</dbReference>
<dbReference type="GO" id="GO:0035792">
    <property type="term" value="C:host cell postsynaptic membrane"/>
    <property type="evidence" value="ECO:0007669"/>
    <property type="project" value="UniProtKB-KW"/>
</dbReference>
<dbReference type="GO" id="GO:0017080">
    <property type="term" value="F:sodium channel regulator activity"/>
    <property type="evidence" value="ECO:0007669"/>
    <property type="project" value="UniProtKB-KW"/>
</dbReference>
<dbReference type="GO" id="GO:0090729">
    <property type="term" value="F:toxin activity"/>
    <property type="evidence" value="ECO:0007669"/>
    <property type="project" value="UniProtKB-KW"/>
</dbReference>
<protein>
    <recommendedName>
        <fullName evidence="4">U15-ctenitoxin-Co1a</fullName>
        <shortName evidence="4">U15-CNTX-Co1a</shortName>
    </recommendedName>
    <alternativeName>
        <fullName evidence="3">Neurotoxin Oc M33-7</fullName>
    </alternativeName>
</protein>